<protein>
    <recommendedName>
        <fullName evidence="4">R2-like ligand binding oxidase</fullName>
        <ecNumber evidence="7">1.-.-.-</ecNumber>
    </recommendedName>
    <alternativeName>
        <fullName evidence="5">MtR2lox</fullName>
    </alternativeName>
    <alternativeName>
        <fullName>Ribonucleotide reductase R2 subunit homolog</fullName>
    </alternativeName>
    <alternativeName>
        <fullName>Ribonucleotide reductase small subunit homolog</fullName>
    </alternativeName>
</protein>
<name>RIR2H_MYCTU</name>
<evidence type="ECO:0000269" key="1">
    <source>
    </source>
</evidence>
<evidence type="ECO:0000269" key="2">
    <source>
    </source>
</evidence>
<evidence type="ECO:0000269" key="3">
    <source>
    </source>
</evidence>
<evidence type="ECO:0000303" key="4">
    <source>
    </source>
</evidence>
<evidence type="ECO:0000303" key="5">
    <source>
    </source>
</evidence>
<evidence type="ECO:0000305" key="6"/>
<evidence type="ECO:0000305" key="7">
    <source>
    </source>
</evidence>
<evidence type="ECO:0007744" key="8">
    <source>
        <dbReference type="PDB" id="3EE4"/>
    </source>
</evidence>
<evidence type="ECO:0007744" key="9">
    <source>
        <dbReference type="PDB" id="4AC8"/>
    </source>
</evidence>
<evidence type="ECO:0007829" key="10">
    <source>
        <dbReference type="PDB" id="3EE4"/>
    </source>
</evidence>
<evidence type="ECO:0007829" key="11">
    <source>
        <dbReference type="PDB" id="4AC8"/>
    </source>
</evidence>
<feature type="chain" id="PRO_0000375432" description="R2-like ligand binding oxidase">
    <location>
        <begin position="1"/>
        <end position="314"/>
    </location>
</feature>
<feature type="binding site" evidence="1 2 8 9">
    <location>
        <position position="68"/>
    </location>
    <ligand>
        <name>Mn(2+)</name>
        <dbReference type="ChEBI" id="CHEBI:29035"/>
    </ligand>
</feature>
<feature type="binding site" evidence="1 2 8 9">
    <location>
        <position position="101"/>
    </location>
    <ligand>
        <name>Fe cation</name>
        <dbReference type="ChEBI" id="CHEBI:24875"/>
    </ligand>
</feature>
<feature type="binding site" evidence="1 2 8 9">
    <location>
        <position position="101"/>
    </location>
    <ligand>
        <name>Mn(2+)</name>
        <dbReference type="ChEBI" id="CHEBI:29035"/>
    </ligand>
</feature>
<feature type="binding site" evidence="1 2 8 9">
    <location>
        <position position="104"/>
    </location>
    <ligand>
        <name>Mn(2+)</name>
        <dbReference type="ChEBI" id="CHEBI:29035"/>
    </ligand>
</feature>
<feature type="binding site" evidence="1 2 8 9">
    <location>
        <position position="167"/>
    </location>
    <ligand>
        <name>Fe cation</name>
        <dbReference type="ChEBI" id="CHEBI:24875"/>
    </ligand>
</feature>
<feature type="binding site" evidence="1 2 8 9">
    <location>
        <position position="202"/>
    </location>
    <ligand>
        <name>Fe cation</name>
        <dbReference type="ChEBI" id="CHEBI:24875"/>
    </ligand>
</feature>
<feature type="binding site" evidence="1 2 8 9">
    <location>
        <position position="205"/>
    </location>
    <ligand>
        <name>Fe cation</name>
        <dbReference type="ChEBI" id="CHEBI:24875"/>
    </ligand>
</feature>
<feature type="cross-link" description="3-(O4'-tyrosyl)-valine (Val-Tyr)" evidence="1 2">
    <location>
        <begin position="71"/>
        <end position="162"/>
    </location>
</feature>
<feature type="helix" evidence="10">
    <location>
        <begin position="7"/>
        <end position="9"/>
    </location>
</feature>
<feature type="helix" evidence="10">
    <location>
        <begin position="19"/>
        <end position="29"/>
    </location>
</feature>
<feature type="helix" evidence="10">
    <location>
        <begin position="34"/>
        <end position="36"/>
    </location>
</feature>
<feature type="helix" evidence="10">
    <location>
        <begin position="42"/>
        <end position="48"/>
    </location>
</feature>
<feature type="helix" evidence="10">
    <location>
        <begin position="51"/>
        <end position="74"/>
    </location>
</feature>
<feature type="helix" evidence="10">
    <location>
        <begin position="76"/>
        <end position="84"/>
    </location>
</feature>
<feature type="helix" evidence="10">
    <location>
        <begin position="88"/>
        <end position="115"/>
    </location>
</feature>
<feature type="helix" evidence="10">
    <location>
        <begin position="122"/>
        <end position="125"/>
    </location>
</feature>
<feature type="helix" evidence="10">
    <location>
        <begin position="129"/>
        <end position="136"/>
    </location>
</feature>
<feature type="helix" evidence="10">
    <location>
        <begin position="138"/>
        <end position="148"/>
    </location>
</feature>
<feature type="helix" evidence="10">
    <location>
        <begin position="152"/>
        <end position="162"/>
    </location>
</feature>
<feature type="helix" evidence="10">
    <location>
        <begin position="163"/>
        <end position="169"/>
    </location>
</feature>
<feature type="helix" evidence="10">
    <location>
        <begin position="170"/>
        <end position="182"/>
    </location>
</feature>
<feature type="turn" evidence="10">
    <location>
        <begin position="183"/>
        <end position="186"/>
    </location>
</feature>
<feature type="helix" evidence="10">
    <location>
        <begin position="189"/>
        <end position="219"/>
    </location>
</feature>
<feature type="helix" evidence="10">
    <location>
        <begin position="222"/>
        <end position="247"/>
    </location>
</feature>
<feature type="turn" evidence="10">
    <location>
        <begin position="248"/>
        <end position="251"/>
    </location>
</feature>
<feature type="helix" evidence="11">
    <location>
        <begin position="254"/>
        <end position="256"/>
    </location>
</feature>
<feature type="helix" evidence="10">
    <location>
        <begin position="259"/>
        <end position="278"/>
    </location>
</feature>
<feature type="turn" evidence="10">
    <location>
        <begin position="279"/>
        <end position="282"/>
    </location>
</feature>
<feature type="helix" evidence="10">
    <location>
        <begin position="285"/>
        <end position="287"/>
    </location>
</feature>
<feature type="helix" evidence="11">
    <location>
        <begin position="293"/>
        <end position="311"/>
    </location>
</feature>
<sequence length="314" mass="35656">MTRTRSGSLAAGGLNWASLPLKLFAGGNAKFWHPADIDFTRDRADWEKLSDDERDYATRLCTQFIAGEEAVTEDIQPFMSAMRAEGRLADEMYLTQFAFEEAKHTQVFRMWLDAVGISEDLHRYLDDLPAYRQIFYAELPECLNALSADPSPAAQVRASVTYNHIVEGMLALTGYYAWHKICVERAILPGMQELVRRIGDDERRHMAWGTFTCRRHVAADDANWTVFETRMNELIPLALRLIEEGFALYGDQPPFDLSKDDFLQYSTDKGMRRFGTISNARGRPVAEIDVDYSPAQLEDTFADEDRRTLAAASA</sequence>
<accession>P9WH69</accession>
<accession>L0T624</accession>
<accession>P96416</accession>
<accession>Q7DA78</accession>
<comment type="function">
    <text evidence="1 3">Probable oxidase that might be involved in lipid metabolism (PubMed:19321420). Is not essential for the survival of M.tuberculosis in stress conditions (PubMed:36149732).</text>
</comment>
<comment type="cofactor">
    <cofactor evidence="1 2">
        <name>Fe cation</name>
        <dbReference type="ChEBI" id="CHEBI:24875"/>
    </cofactor>
    <text evidence="1 2">Binds 1 Fe cation per subunit.</text>
</comment>
<comment type="cofactor">
    <cofactor evidence="1 2">
        <name>Mn(2+)</name>
        <dbReference type="ChEBI" id="CHEBI:29035"/>
    </cofactor>
    <text evidence="1 2">Binds 1 manganese ion per subunit. The iron and manganese ions form a dinuclear manganese-iron cluster.</text>
</comment>
<comment type="subunit">
    <text evidence="2 7">Homodimer.</text>
</comment>
<comment type="interaction">
    <interactant intactId="EBI-15765696">
        <id>P9WH69</id>
    </interactant>
    <interactant intactId="EBI-15765696">
        <id>P9WH69</id>
        <label>nrdB</label>
    </interactant>
    <organismsDiffer>false</organismsDiffer>
    <experiments>2</experiments>
</comment>
<comment type="domain">
    <text evidence="2">The C-terminal segment can alternate between an ordered and disordered state (PubMed:22976985). Ordering of the C-terminal helix shields a large positively charged patch on the protein surface, potentially used for interaction with other cellular components (PubMed:22976985).</text>
</comment>
<comment type="disruption phenotype">
    <text evidence="3">Deletion of the gene does not have a major impact on sensitivity to frontline tuberculosis drugs such as rifampicin, isoniazid or ethambutol, and does not affect susceptibility to hydrogen peroxide (PubMed:36149732). The deletion mutant survives equally well under nutrient starvation or in hypoxia and is not attenuated for growth in macrophages (PubMed:36149732).</text>
</comment>
<comment type="similarity">
    <text evidence="6">Belongs to the ribonucleoside diphosphate reductase small chain family. R2-like ligand binding oxidase subfamily.</text>
</comment>
<dbReference type="EC" id="1.-.-.-" evidence="7"/>
<dbReference type="EMBL" id="AL123456">
    <property type="protein sequence ID" value="CCP42961.1"/>
    <property type="molecule type" value="Genomic_DNA"/>
</dbReference>
<dbReference type="PIR" id="G70962">
    <property type="entry name" value="G70962"/>
</dbReference>
<dbReference type="RefSeq" id="NP_214747.1">
    <property type="nucleotide sequence ID" value="NC_000962.3"/>
</dbReference>
<dbReference type="RefSeq" id="WP_003911100.1">
    <property type="nucleotide sequence ID" value="NZ_NVQJ01000001.1"/>
</dbReference>
<dbReference type="PDB" id="3EE4">
    <property type="method" value="X-ray"/>
    <property type="resolution" value="1.90 A"/>
    <property type="chains" value="A=1-314"/>
</dbReference>
<dbReference type="PDB" id="4AC8">
    <property type="method" value="X-ray"/>
    <property type="resolution" value="2.75 A"/>
    <property type="chains" value="A/B/C/D=1-314"/>
</dbReference>
<dbReference type="PDBsum" id="3EE4"/>
<dbReference type="PDBsum" id="4AC8"/>
<dbReference type="SMR" id="P9WH69"/>
<dbReference type="FunCoup" id="P9WH69">
    <property type="interactions" value="36"/>
</dbReference>
<dbReference type="STRING" id="83332.Rv0233"/>
<dbReference type="DrugBank" id="DB08231">
    <property type="generic name" value="Myristic acid"/>
</dbReference>
<dbReference type="PaxDb" id="83332-Rv0233"/>
<dbReference type="DNASU" id="886699"/>
<dbReference type="GeneID" id="886699"/>
<dbReference type="KEGG" id="mtu:Rv0233"/>
<dbReference type="KEGG" id="mtv:RVBD_0233"/>
<dbReference type="TubercuList" id="Rv0233"/>
<dbReference type="eggNOG" id="COG0208">
    <property type="taxonomic scope" value="Bacteria"/>
</dbReference>
<dbReference type="InParanoid" id="P9WH69"/>
<dbReference type="OrthoDB" id="5489780at2"/>
<dbReference type="EvolutionaryTrace" id="P9WH69"/>
<dbReference type="Proteomes" id="UP000001584">
    <property type="component" value="Chromosome"/>
</dbReference>
<dbReference type="GO" id="GO:0005829">
    <property type="term" value="C:cytosol"/>
    <property type="evidence" value="ECO:0007005"/>
    <property type="project" value="MTBBASE"/>
</dbReference>
<dbReference type="GO" id="GO:0042802">
    <property type="term" value="F:identical protein binding"/>
    <property type="evidence" value="ECO:0000353"/>
    <property type="project" value="IntAct"/>
</dbReference>
<dbReference type="GO" id="GO:0005506">
    <property type="term" value="F:iron ion binding"/>
    <property type="evidence" value="ECO:0000314"/>
    <property type="project" value="MTBBASE"/>
</dbReference>
<dbReference type="GO" id="GO:0030145">
    <property type="term" value="F:manganese ion binding"/>
    <property type="evidence" value="ECO:0000314"/>
    <property type="project" value="MTBBASE"/>
</dbReference>
<dbReference type="GO" id="GO:0016491">
    <property type="term" value="F:oxidoreductase activity"/>
    <property type="evidence" value="ECO:0000314"/>
    <property type="project" value="MTBBASE"/>
</dbReference>
<dbReference type="GO" id="GO:0009263">
    <property type="term" value="P:deoxyribonucleotide biosynthetic process"/>
    <property type="evidence" value="ECO:0007669"/>
    <property type="project" value="InterPro"/>
</dbReference>
<dbReference type="CDD" id="cd07911">
    <property type="entry name" value="RNRR2_Rv0233_like"/>
    <property type="match status" value="1"/>
</dbReference>
<dbReference type="Gene3D" id="1.10.620.20">
    <property type="entry name" value="Ribonucleotide Reductase, subunit A"/>
    <property type="match status" value="1"/>
</dbReference>
<dbReference type="InterPro" id="IPR009078">
    <property type="entry name" value="Ferritin-like_SF"/>
</dbReference>
<dbReference type="InterPro" id="IPR033908">
    <property type="entry name" value="R2LOX"/>
</dbReference>
<dbReference type="InterPro" id="IPR012348">
    <property type="entry name" value="RNR-like"/>
</dbReference>
<dbReference type="InterPro" id="IPR000358">
    <property type="entry name" value="RNR_small_fam"/>
</dbReference>
<dbReference type="NCBIfam" id="NF006199">
    <property type="entry name" value="PRK08326.1-2"/>
    <property type="match status" value="1"/>
</dbReference>
<dbReference type="NCBIfam" id="NF006200">
    <property type="entry name" value="PRK08326.1-3"/>
    <property type="match status" value="1"/>
</dbReference>
<dbReference type="NCBIfam" id="NF006201">
    <property type="entry name" value="PRK08326.1-4"/>
    <property type="match status" value="1"/>
</dbReference>
<dbReference type="Pfam" id="PF00268">
    <property type="entry name" value="Ribonuc_red_sm"/>
    <property type="match status" value="1"/>
</dbReference>
<dbReference type="SUPFAM" id="SSF47240">
    <property type="entry name" value="Ferritin-like"/>
    <property type="match status" value="1"/>
</dbReference>
<gene>
    <name type="primary">nrdB</name>
    <name type="ordered locus">Rv0233</name>
</gene>
<proteinExistence type="evidence at protein level"/>
<reference key="1">
    <citation type="journal article" date="1998" name="Nature">
        <title>Deciphering the biology of Mycobacterium tuberculosis from the complete genome sequence.</title>
        <authorList>
            <person name="Cole S.T."/>
            <person name="Brosch R."/>
            <person name="Parkhill J."/>
            <person name="Garnier T."/>
            <person name="Churcher C.M."/>
            <person name="Harris D.E."/>
            <person name="Gordon S.V."/>
            <person name="Eiglmeier K."/>
            <person name="Gas S."/>
            <person name="Barry C.E. III"/>
            <person name="Tekaia F."/>
            <person name="Badcock K."/>
            <person name="Basham D."/>
            <person name="Brown D."/>
            <person name="Chillingworth T."/>
            <person name="Connor R."/>
            <person name="Davies R.M."/>
            <person name="Devlin K."/>
            <person name="Feltwell T."/>
            <person name="Gentles S."/>
            <person name="Hamlin N."/>
            <person name="Holroyd S."/>
            <person name="Hornsby T."/>
            <person name="Jagels K."/>
            <person name="Krogh A."/>
            <person name="McLean J."/>
            <person name="Moule S."/>
            <person name="Murphy L.D."/>
            <person name="Oliver S."/>
            <person name="Osborne J."/>
            <person name="Quail M.A."/>
            <person name="Rajandream M.A."/>
            <person name="Rogers J."/>
            <person name="Rutter S."/>
            <person name="Seeger K."/>
            <person name="Skelton S."/>
            <person name="Squares S."/>
            <person name="Squares R."/>
            <person name="Sulston J.E."/>
            <person name="Taylor K."/>
            <person name="Whitehead S."/>
            <person name="Barrell B.G."/>
        </authorList>
    </citation>
    <scope>NUCLEOTIDE SEQUENCE [LARGE SCALE GENOMIC DNA]</scope>
    <source>
        <strain>ATCC 25618 / H37Rv</strain>
    </source>
</reference>
<reference key="2">
    <citation type="journal article" date="2011" name="Mol. Cell. Proteomics">
        <title>Proteogenomic analysis of Mycobacterium tuberculosis by high resolution mass spectrometry.</title>
        <authorList>
            <person name="Kelkar D.S."/>
            <person name="Kumar D."/>
            <person name="Kumar P."/>
            <person name="Balakrishnan L."/>
            <person name="Muthusamy B."/>
            <person name="Yadav A.K."/>
            <person name="Shrivastava P."/>
            <person name="Marimuthu A."/>
            <person name="Anand S."/>
            <person name="Sundaram H."/>
            <person name="Kingsbury R."/>
            <person name="Harsha H.C."/>
            <person name="Nair B."/>
            <person name="Prasad T.S."/>
            <person name="Chauhan D.S."/>
            <person name="Katoch K."/>
            <person name="Katoch V.M."/>
            <person name="Kumar P."/>
            <person name="Chaerkady R."/>
            <person name="Ramachandran S."/>
            <person name="Dash D."/>
            <person name="Pandey A."/>
        </authorList>
    </citation>
    <scope>IDENTIFICATION BY MASS SPECTROMETRY [LARGE SCALE ANALYSIS]</scope>
    <source>
        <strain>ATCC 25618 / H37Rv</strain>
    </source>
</reference>
<reference key="3">
    <citation type="journal article" date="2022" name="Microbiology">
        <title>Rv0233 is not essential for the survival of Mycobacterium tuberculosis in stress conditions.</title>
        <authorList>
            <person name="Ikeh M.A."/>
            <person name="Parish T."/>
        </authorList>
    </citation>
    <scope>FUNCTION</scope>
    <scope>DISRUPTION PHENOTYPE</scope>
    <source>
        <strain>ATCC 25618 / H37Rv</strain>
    </source>
</reference>
<reference evidence="8" key="4">
    <citation type="journal article" date="2009" name="Proc. Natl. Acad. Sci. U.S.A.">
        <title>A Mycobacterium tuberculosis ligand-binding Mn/Fe protein reveals a new cofactor in a remodeled R2-protein scaffold.</title>
        <authorList>
            <person name="Andersson C.S."/>
            <person name="Hoegbom M."/>
        </authorList>
    </citation>
    <scope>X-RAY CRYSTALLOGRAPHY (1.9 ANGSTROMS) IN COMPLEX WITH IRON; MANGANESE AND MYRISTIC ACID</scope>
    <scope>FUNCTION</scope>
    <scope>COFACTOR</scope>
    <scope>SUBUNIT</scope>
    <scope>VAL-TYR CROSS-LINK</scope>
    <source>
        <strain>ATCC 25618 / H37Rv</strain>
    </source>
</reference>
<reference evidence="9" key="5">
    <citation type="journal article" date="2012" name="Chem. Biodivers.">
        <title>A dynamic C-terminal segment in the Mycobacterium tuberculosis Mn/Fe R2lox protein can adopt a helical structure with possible functional consequences.</title>
        <authorList>
            <person name="Andersson C.S."/>
            <person name="Berthold C.L."/>
            <person name="Hogbom M."/>
        </authorList>
    </citation>
    <scope>X-RAY CRYSTALLOGRAPHY (2.75 ANGSTROMS) IN COMPLEX WITH IRON; MANGANESE AND MYRISTIC ACID</scope>
    <scope>VAL-TYR CROSS-LINK</scope>
    <scope>COFACTOR</scope>
    <scope>SUBUNIT</scope>
    <scope>DOMAIN</scope>
    <source>
        <strain>H37Rv</strain>
    </source>
</reference>
<organism>
    <name type="scientific">Mycobacterium tuberculosis (strain ATCC 25618 / H37Rv)</name>
    <dbReference type="NCBI Taxonomy" id="83332"/>
    <lineage>
        <taxon>Bacteria</taxon>
        <taxon>Bacillati</taxon>
        <taxon>Actinomycetota</taxon>
        <taxon>Actinomycetes</taxon>
        <taxon>Mycobacteriales</taxon>
        <taxon>Mycobacteriaceae</taxon>
        <taxon>Mycobacterium</taxon>
        <taxon>Mycobacterium tuberculosis complex</taxon>
    </lineage>
</organism>
<keyword id="KW-0002">3D-structure</keyword>
<keyword id="KW-0408">Iron</keyword>
<keyword id="KW-0449">Lipoprotein</keyword>
<keyword id="KW-0464">Manganese</keyword>
<keyword id="KW-0479">Metal-binding</keyword>
<keyword id="KW-0560">Oxidoreductase</keyword>
<keyword id="KW-1185">Reference proteome</keyword>